<evidence type="ECO:0000255" key="1">
    <source>
        <dbReference type="HAMAP-Rule" id="MF_00211"/>
    </source>
</evidence>
<accession>C1KVS8</accession>
<sequence length="339" mass="36698">MEILLQKVYDQENLSKEEMTMIATEIFEGRLSKTKIAAFLMALKVKGETAEEMAGIAQAMQRVAIQVAFPAGTAMDNCGTGGDKSNSFNISTTSAFVLAAAGIPVAKHGNRSISSRSGSADVCQELGIDINMRPEDMTYLLEKVGIAFLFAPHVHPNMKYVMDVRKELGTPTIFNLIGPLTNPVHLETQLMGIYRRDLLEQTAEVLGQLGRKRAVVLNGAGFMDEASLAGENHYALYENGEVHLYTLRPEDVGLTSYPLEAITGGEAKENAAILRSVLDGEPGAYLDTVLLNAGFGLFANGKVTTVQEGVDLARDLIRSGLAKQKLADLITYQKEVLAK</sequence>
<name>TRPD_LISMC</name>
<dbReference type="EC" id="2.4.2.18" evidence="1"/>
<dbReference type="EMBL" id="FM242711">
    <property type="protein sequence ID" value="CAS05403.1"/>
    <property type="molecule type" value="Genomic_DNA"/>
</dbReference>
<dbReference type="RefSeq" id="WP_003726781.1">
    <property type="nucleotide sequence ID" value="NC_012488.1"/>
</dbReference>
<dbReference type="SMR" id="C1KVS8"/>
<dbReference type="KEGG" id="lmc:Lm4b_01642"/>
<dbReference type="HOGENOM" id="CLU_034315_2_1_9"/>
<dbReference type="UniPathway" id="UPA00035">
    <property type="reaction ID" value="UER00041"/>
</dbReference>
<dbReference type="GO" id="GO:0005829">
    <property type="term" value="C:cytosol"/>
    <property type="evidence" value="ECO:0007669"/>
    <property type="project" value="TreeGrafter"/>
</dbReference>
<dbReference type="GO" id="GO:0004048">
    <property type="term" value="F:anthranilate phosphoribosyltransferase activity"/>
    <property type="evidence" value="ECO:0007669"/>
    <property type="project" value="UniProtKB-UniRule"/>
</dbReference>
<dbReference type="GO" id="GO:0000287">
    <property type="term" value="F:magnesium ion binding"/>
    <property type="evidence" value="ECO:0007669"/>
    <property type="project" value="UniProtKB-UniRule"/>
</dbReference>
<dbReference type="GO" id="GO:0000162">
    <property type="term" value="P:L-tryptophan biosynthetic process"/>
    <property type="evidence" value="ECO:0007669"/>
    <property type="project" value="UniProtKB-UniRule"/>
</dbReference>
<dbReference type="FunFam" id="1.20.970.10:FF:000014">
    <property type="entry name" value="Anthranilate phosphoribosyltransferase"/>
    <property type="match status" value="1"/>
</dbReference>
<dbReference type="FunFam" id="3.40.1030.10:FF:000002">
    <property type="entry name" value="Anthranilate phosphoribosyltransferase"/>
    <property type="match status" value="1"/>
</dbReference>
<dbReference type="Gene3D" id="3.40.1030.10">
    <property type="entry name" value="Nucleoside phosphorylase/phosphoribosyltransferase catalytic domain"/>
    <property type="match status" value="1"/>
</dbReference>
<dbReference type="Gene3D" id="1.20.970.10">
    <property type="entry name" value="Transferase, Pyrimidine Nucleoside Phosphorylase, Chain C"/>
    <property type="match status" value="1"/>
</dbReference>
<dbReference type="HAMAP" id="MF_00211">
    <property type="entry name" value="TrpD"/>
    <property type="match status" value="1"/>
</dbReference>
<dbReference type="InterPro" id="IPR005940">
    <property type="entry name" value="Anthranilate_Pribosyl_Tfrase"/>
</dbReference>
<dbReference type="InterPro" id="IPR000312">
    <property type="entry name" value="Glycosyl_Trfase_fam3"/>
</dbReference>
<dbReference type="InterPro" id="IPR017459">
    <property type="entry name" value="Glycosyl_Trfase_fam3_N_dom"/>
</dbReference>
<dbReference type="InterPro" id="IPR036320">
    <property type="entry name" value="Glycosyl_Trfase_fam3_N_dom_sf"/>
</dbReference>
<dbReference type="InterPro" id="IPR035902">
    <property type="entry name" value="Nuc_phospho_transferase"/>
</dbReference>
<dbReference type="NCBIfam" id="TIGR01245">
    <property type="entry name" value="trpD"/>
    <property type="match status" value="1"/>
</dbReference>
<dbReference type="PANTHER" id="PTHR43285">
    <property type="entry name" value="ANTHRANILATE PHOSPHORIBOSYLTRANSFERASE"/>
    <property type="match status" value="1"/>
</dbReference>
<dbReference type="PANTHER" id="PTHR43285:SF2">
    <property type="entry name" value="ANTHRANILATE PHOSPHORIBOSYLTRANSFERASE"/>
    <property type="match status" value="1"/>
</dbReference>
<dbReference type="Pfam" id="PF02885">
    <property type="entry name" value="Glycos_trans_3N"/>
    <property type="match status" value="1"/>
</dbReference>
<dbReference type="Pfam" id="PF00591">
    <property type="entry name" value="Glycos_transf_3"/>
    <property type="match status" value="1"/>
</dbReference>
<dbReference type="SUPFAM" id="SSF52418">
    <property type="entry name" value="Nucleoside phosphorylase/phosphoribosyltransferase catalytic domain"/>
    <property type="match status" value="1"/>
</dbReference>
<dbReference type="SUPFAM" id="SSF47648">
    <property type="entry name" value="Nucleoside phosphorylase/phosphoribosyltransferase N-terminal domain"/>
    <property type="match status" value="1"/>
</dbReference>
<comment type="function">
    <text evidence="1">Catalyzes the transfer of the phosphoribosyl group of 5-phosphorylribose-1-pyrophosphate (PRPP) to anthranilate to yield N-(5'-phosphoribosyl)-anthranilate (PRA).</text>
</comment>
<comment type="catalytic activity">
    <reaction evidence="1">
        <text>N-(5-phospho-beta-D-ribosyl)anthranilate + diphosphate = 5-phospho-alpha-D-ribose 1-diphosphate + anthranilate</text>
        <dbReference type="Rhea" id="RHEA:11768"/>
        <dbReference type="ChEBI" id="CHEBI:16567"/>
        <dbReference type="ChEBI" id="CHEBI:18277"/>
        <dbReference type="ChEBI" id="CHEBI:33019"/>
        <dbReference type="ChEBI" id="CHEBI:58017"/>
        <dbReference type="EC" id="2.4.2.18"/>
    </reaction>
</comment>
<comment type="cofactor">
    <cofactor evidence="1">
        <name>Mg(2+)</name>
        <dbReference type="ChEBI" id="CHEBI:18420"/>
    </cofactor>
    <text evidence="1">Binds 2 magnesium ions per monomer.</text>
</comment>
<comment type="pathway">
    <text evidence="1">Amino-acid biosynthesis; L-tryptophan biosynthesis; L-tryptophan from chorismate: step 2/5.</text>
</comment>
<comment type="subunit">
    <text evidence="1">Homodimer.</text>
</comment>
<comment type="similarity">
    <text evidence="1">Belongs to the anthranilate phosphoribosyltransferase family.</text>
</comment>
<organism>
    <name type="scientific">Listeria monocytogenes serotype 4b (strain CLIP80459)</name>
    <dbReference type="NCBI Taxonomy" id="568819"/>
    <lineage>
        <taxon>Bacteria</taxon>
        <taxon>Bacillati</taxon>
        <taxon>Bacillota</taxon>
        <taxon>Bacilli</taxon>
        <taxon>Bacillales</taxon>
        <taxon>Listeriaceae</taxon>
        <taxon>Listeria</taxon>
    </lineage>
</organism>
<protein>
    <recommendedName>
        <fullName evidence="1">Anthranilate phosphoribosyltransferase</fullName>
        <ecNumber evidence="1">2.4.2.18</ecNumber>
    </recommendedName>
</protein>
<reference key="1">
    <citation type="journal article" date="2012" name="BMC Genomics">
        <title>Comparative genomics and transcriptomics of lineages I, II, and III strains of Listeria monocytogenes.</title>
        <authorList>
            <person name="Hain T."/>
            <person name="Ghai R."/>
            <person name="Billion A."/>
            <person name="Kuenne C.T."/>
            <person name="Steinweg C."/>
            <person name="Izar B."/>
            <person name="Mohamed W."/>
            <person name="Mraheil M."/>
            <person name="Domann E."/>
            <person name="Schaffrath S."/>
            <person name="Karst U."/>
            <person name="Goesmann A."/>
            <person name="Oehm S."/>
            <person name="Puhler A."/>
            <person name="Merkl R."/>
            <person name="Vorwerk S."/>
            <person name="Glaser P."/>
            <person name="Garrido P."/>
            <person name="Rusniok C."/>
            <person name="Buchrieser C."/>
            <person name="Goebel W."/>
            <person name="Chakraborty T."/>
        </authorList>
    </citation>
    <scope>NUCLEOTIDE SEQUENCE [LARGE SCALE GENOMIC DNA]</scope>
    <source>
        <strain>CLIP80459</strain>
    </source>
</reference>
<keyword id="KW-0028">Amino-acid biosynthesis</keyword>
<keyword id="KW-0057">Aromatic amino acid biosynthesis</keyword>
<keyword id="KW-0328">Glycosyltransferase</keyword>
<keyword id="KW-0460">Magnesium</keyword>
<keyword id="KW-0479">Metal-binding</keyword>
<keyword id="KW-0808">Transferase</keyword>
<keyword id="KW-0822">Tryptophan biosynthesis</keyword>
<feature type="chain" id="PRO_1000204186" description="Anthranilate phosphoribosyltransferase">
    <location>
        <begin position="1"/>
        <end position="339"/>
    </location>
</feature>
<feature type="binding site" evidence="1">
    <location>
        <position position="79"/>
    </location>
    <ligand>
        <name>5-phospho-alpha-D-ribose 1-diphosphate</name>
        <dbReference type="ChEBI" id="CHEBI:58017"/>
    </ligand>
</feature>
<feature type="binding site" evidence="1">
    <location>
        <position position="79"/>
    </location>
    <ligand>
        <name>anthranilate</name>
        <dbReference type="ChEBI" id="CHEBI:16567"/>
        <label>1</label>
    </ligand>
</feature>
<feature type="binding site" evidence="1">
    <location>
        <begin position="82"/>
        <end position="83"/>
    </location>
    <ligand>
        <name>5-phospho-alpha-D-ribose 1-diphosphate</name>
        <dbReference type="ChEBI" id="CHEBI:58017"/>
    </ligand>
</feature>
<feature type="binding site" evidence="1">
    <location>
        <position position="87"/>
    </location>
    <ligand>
        <name>5-phospho-alpha-D-ribose 1-diphosphate</name>
        <dbReference type="ChEBI" id="CHEBI:58017"/>
    </ligand>
</feature>
<feature type="binding site" evidence="1">
    <location>
        <begin position="89"/>
        <end position="92"/>
    </location>
    <ligand>
        <name>5-phospho-alpha-D-ribose 1-diphosphate</name>
        <dbReference type="ChEBI" id="CHEBI:58017"/>
    </ligand>
</feature>
<feature type="binding site" evidence="1">
    <location>
        <position position="91"/>
    </location>
    <ligand>
        <name>Mg(2+)</name>
        <dbReference type="ChEBI" id="CHEBI:18420"/>
        <label>1</label>
    </ligand>
</feature>
<feature type="binding site" evidence="1">
    <location>
        <begin position="107"/>
        <end position="115"/>
    </location>
    <ligand>
        <name>5-phospho-alpha-D-ribose 1-diphosphate</name>
        <dbReference type="ChEBI" id="CHEBI:58017"/>
    </ligand>
</feature>
<feature type="binding site" evidence="1">
    <location>
        <position position="110"/>
    </location>
    <ligand>
        <name>anthranilate</name>
        <dbReference type="ChEBI" id="CHEBI:16567"/>
        <label>1</label>
    </ligand>
</feature>
<feature type="binding site" evidence="1">
    <location>
        <position position="119"/>
    </location>
    <ligand>
        <name>5-phospho-alpha-D-ribose 1-diphosphate</name>
        <dbReference type="ChEBI" id="CHEBI:58017"/>
    </ligand>
</feature>
<feature type="binding site" evidence="1">
    <location>
        <position position="165"/>
    </location>
    <ligand>
        <name>anthranilate</name>
        <dbReference type="ChEBI" id="CHEBI:16567"/>
        <label>2</label>
    </ligand>
</feature>
<feature type="binding site" evidence="1">
    <location>
        <position position="224"/>
    </location>
    <ligand>
        <name>Mg(2+)</name>
        <dbReference type="ChEBI" id="CHEBI:18420"/>
        <label>2</label>
    </ligand>
</feature>
<feature type="binding site" evidence="1">
    <location>
        <position position="225"/>
    </location>
    <ligand>
        <name>Mg(2+)</name>
        <dbReference type="ChEBI" id="CHEBI:18420"/>
        <label>1</label>
    </ligand>
</feature>
<feature type="binding site" evidence="1">
    <location>
        <position position="225"/>
    </location>
    <ligand>
        <name>Mg(2+)</name>
        <dbReference type="ChEBI" id="CHEBI:18420"/>
        <label>2</label>
    </ligand>
</feature>
<proteinExistence type="inferred from homology"/>
<gene>
    <name evidence="1" type="primary">trpD</name>
    <name type="ordered locus">Lm4b_01642</name>
</gene>